<feature type="chain" id="PRO_0000391714" description="Type III secretion system chaperone SseA">
    <location>
        <begin position="1"/>
        <end position="108"/>
    </location>
</feature>
<feature type="coiled-coil region" evidence="1">
    <location>
        <begin position="69"/>
        <end position="97"/>
    </location>
</feature>
<organism>
    <name type="scientific">Salmonella typhimurium (strain LT2 / SGSC1412 / ATCC 700720)</name>
    <dbReference type="NCBI Taxonomy" id="99287"/>
    <lineage>
        <taxon>Bacteria</taxon>
        <taxon>Pseudomonadati</taxon>
        <taxon>Pseudomonadota</taxon>
        <taxon>Gammaproteobacteria</taxon>
        <taxon>Enterobacterales</taxon>
        <taxon>Enterobacteriaceae</taxon>
        <taxon>Salmonella</taxon>
    </lineage>
</organism>
<evidence type="ECO:0000255" key="1"/>
<evidence type="ECO:0000269" key="2">
    <source>
    </source>
</evidence>
<evidence type="ECO:0000269" key="3">
    <source>
    </source>
</evidence>
<evidence type="ECO:0000269" key="4">
    <source>
    </source>
</evidence>
<evidence type="ECO:0000269" key="5">
    <source>
    </source>
</evidence>
<evidence type="ECO:0000269" key="6">
    <source>
    </source>
</evidence>
<evidence type="ECO:0000269" key="7">
    <source>
    </source>
</evidence>
<evidence type="ECO:0000269" key="8">
    <source>
    </source>
</evidence>
<evidence type="ECO:0000269" key="9">
    <source>
    </source>
</evidence>
<evidence type="ECO:0000269" key="10">
    <source>
    </source>
</evidence>
<evidence type="ECO:0000303" key="11">
    <source>
    </source>
</evidence>
<evidence type="ECO:0000303" key="12">
    <source>
    </source>
</evidence>
<evidence type="ECO:0000303" key="13">
    <source>
    </source>
</evidence>
<evidence type="ECO:0000305" key="14">
    <source>
    </source>
</evidence>
<evidence type="ECO:0000305" key="15">
    <source>
    </source>
</evidence>
<accession>O84944</accession>
<accession>Q7CQM2</accession>
<keyword id="KW-0143">Chaperone</keyword>
<keyword id="KW-0175">Coiled coil</keyword>
<keyword id="KW-0963">Cytoplasm</keyword>
<keyword id="KW-1185">Reference proteome</keyword>
<keyword id="KW-0843">Virulence</keyword>
<name>SSEA_SALTY</name>
<gene>
    <name type="primary">sseA</name>
    <name type="ordered locus">STM1397</name>
</gene>
<comment type="function">
    <text evidence="2 3 4">Functions as a type III secretion system (T3SS) chaperone, which is required for SseB and SseD accumulation and secretion. May have a direct role in secretion of SseB and SseD, or may facilitate their correct folding, for efficient secretion and function. Required for survival and replication within epithelial cells and macrophages.</text>
</comment>
<comment type="subunit">
    <text>Binds to SseB and SseD.</text>
</comment>
<comment type="interaction">
    <interactant intactId="EBI-2030631">
        <id>O84944</id>
    </interactant>
    <interactant intactId="EBI-2272067">
        <id>Q9R803</id>
        <label>sctB2</label>
    </interactant>
    <organismsDiffer>false</organismsDiffer>
    <experiments>2</experiments>
</comment>
<comment type="interaction">
    <interactant intactId="EBI-2030631">
        <id>O84944</id>
    </interactant>
    <interactant intactId="EBI-2030613">
        <id>Q7BVH7</id>
        <label>sseB</label>
    </interactant>
    <organismsDiffer>false</organismsDiffer>
    <experiments>4</experiments>
</comment>
<comment type="subcellular location">
    <subcellularLocation>
        <location evidence="14 15">Cytoplasm</location>
    </subcellularLocation>
    <text>May associate with the inner membrane.</text>
</comment>
<comment type="induction">
    <text evidence="6 7 8 9 10">Expression is regulated by the two-component regulatory system SsrA/SsrB (PubMed:9786193). Expressed when residing in the host ileal loop, host macrophages, and when in an acidic environment (PubMed:16304611, PubMed:17630976, PubMed:19858298, PubMed:32413287). Repressed by methyl-3,4-dephostatin (PubMed:32413287).</text>
</comment>
<comment type="domain">
    <text evidence="5">The N-terminal region is dispensable for binding and stabilizing SseB, but is essential for export of SseB to the surface of the bacterium.</text>
</comment>
<comment type="disruption phenotype">
    <text evidence="4 10">Mutant is severely attenuated in virulence.</text>
</comment>
<sequence length="108" mass="12449">MMIKKKAAFSEYRDLEQSYMQLNHCLKKFHQIRAKVSQQLAERAESPKNSRETESILHNLFPQGVAGVNQEAEKDLKKIVSLFKQLEVRLKQLNAQAPVEIPSGKTKR</sequence>
<protein>
    <recommendedName>
        <fullName>Type III secretion system chaperone SseA</fullName>
        <shortName>T3SS chaperone SseA</shortName>
    </recommendedName>
    <alternativeName>
        <fullName>Secretion system effector A</fullName>
    </alternativeName>
</protein>
<proteinExistence type="evidence at protein level"/>
<reference key="1">
    <citation type="journal article" date="1998" name="Mol. Microbiol.">
        <title>Genes encoding putative effector proteins of the type III secretion system of Salmonella pathogenicity island 2 are required for bacterial virulence and proliferation in macrophages.</title>
        <authorList>
            <person name="Hensel M."/>
            <person name="Shea J.E."/>
            <person name="Waterman S.R."/>
            <person name="Mundy R."/>
            <person name="Nikolaus T."/>
            <person name="Banks G."/>
            <person name="Vazquez-Torres A."/>
            <person name="Gleeson C."/>
            <person name="Fang F.C."/>
            <person name="Holden D.W."/>
        </authorList>
    </citation>
    <scope>NUCLEOTIDE SEQUENCE [GENOMIC DNA]</scope>
    <scope>INDUCTION</scope>
    <scope>DISRUPTION PHENOTYPE</scope>
    <source>
        <strain>ATCC 14028 / SGSC 2980 / CDC 6516-60 / NCTC 12023</strain>
    </source>
</reference>
<reference key="2">
    <citation type="journal article" date="1998" name="Mol. Microbiol.">
        <title>Macrophage-dependent induction of the Salmonella pathogenicity island 2 type III secretion system and its role in intracellular survival.</title>
        <authorList>
            <person name="Cirillo D.M."/>
            <person name="Valdivia R.H."/>
            <person name="Monack D.M."/>
            <person name="Falkow S."/>
        </authorList>
    </citation>
    <scope>NUCLEOTIDE SEQUENCE [GENOMIC DNA]</scope>
    <source>
        <strain>SL1344</strain>
    </source>
</reference>
<reference key="3">
    <citation type="journal article" date="2001" name="Nature">
        <title>Complete genome sequence of Salmonella enterica serovar Typhimurium LT2.</title>
        <authorList>
            <person name="McClelland M."/>
            <person name="Sanderson K.E."/>
            <person name="Spieth J."/>
            <person name="Clifton S.W."/>
            <person name="Latreille P."/>
            <person name="Courtney L."/>
            <person name="Porwollik S."/>
            <person name="Ali J."/>
            <person name="Dante M."/>
            <person name="Du F."/>
            <person name="Hou S."/>
            <person name="Layman D."/>
            <person name="Leonard S."/>
            <person name="Nguyen C."/>
            <person name="Scott K."/>
            <person name="Holmes A."/>
            <person name="Grewal N."/>
            <person name="Mulvaney E."/>
            <person name="Ryan E."/>
            <person name="Sun H."/>
            <person name="Florea L."/>
            <person name="Miller W."/>
            <person name="Stoneking T."/>
            <person name="Nhan M."/>
            <person name="Waterston R."/>
            <person name="Wilson R.K."/>
        </authorList>
    </citation>
    <scope>NUCLEOTIDE SEQUENCE [LARGE SCALE GENOMIC DNA]</scope>
    <source>
        <strain>LT2 / SGSC1412 / ATCC 700720</strain>
    </source>
</reference>
<reference key="4">
    <citation type="journal article" date="2003" name="Microbes Infect.">
        <title>SseA is required for translocation of Salmonella pathogenicity island-2 effectors into host cells.</title>
        <authorList>
            <person name="Coombes B.K."/>
            <person name="Brown N.F."/>
            <person name="Kujat-Choy S."/>
            <person name="Vallance B.A."/>
            <person name="Finlay B.B."/>
        </authorList>
    </citation>
    <scope>FUNCTION</scope>
    <scope>SUBCELLULAR LOCATION</scope>
    <scope>DISRUPTION PHENOTYPE</scope>
    <source>
        <strain>SL1344</strain>
    </source>
</reference>
<reference key="5">
    <citation type="journal article" date="2003" name="Microbiology">
        <title>SseA is a chaperone for the SseB and SseD translocon components of the Salmonella pathogenicity-island-2-encoded type III secretion system.</title>
        <authorList>
            <person name="Ruiz-Albert J."/>
            <person name="Mundy R."/>
            <person name="Yu X.J."/>
            <person name="Beuzon C.R."/>
            <person name="Holden D.W."/>
        </authorList>
    </citation>
    <scope>FUNCTION AS A CHAPERONE</scope>
    <scope>BINDING TO SSEB AND SSED</scope>
    <source>
        <strain>ATCC 14028 / SGSC 2980 / CDC 6516-60 / NCTC 12023</strain>
    </source>
</reference>
<reference key="6">
    <citation type="journal article" date="2003" name="Mol. Microbiol.">
        <title>SseA acts as the chaperone for the SseB component of the Salmonella pathogenicity island 2 translocon.</title>
        <authorList>
            <person name="Zurawski D.V."/>
            <person name="Stein M.A."/>
        </authorList>
    </citation>
    <scope>FUNCTION AS A CHAPERONE</scope>
    <scope>SUBCELLULAR LOCATION</scope>
    <scope>BINDING TO SSEB</scope>
    <source>
        <strain>SL1344</strain>
    </source>
</reference>
<reference key="7">
    <citation type="journal article" date="2004" name="Microbiology">
        <title>The SPI2-encoded SseA chaperone has discrete domains required for SseB stabilization and export, and binds within the C-terminus of SseB and SseD.</title>
        <authorList>
            <person name="Zurawski D.V."/>
            <person name="Stein M.A."/>
        </authorList>
    </citation>
    <scope>BINDING TO SSEB AND SSED</scope>
    <scope>DOMAIN</scope>
    <source>
        <strain>SL1344</strain>
    </source>
</reference>
<reference key="8">
    <citation type="journal article" date="2005" name="PLoS Pathog.">
        <title>Salmonella pathogenicity island 2 is expressed prior to penetrating the intestine.</title>
        <authorList>
            <person name="Brown N.F."/>
            <person name="Vallance B.A."/>
            <person name="Coombes B.K."/>
            <person name="Valdez Y."/>
            <person name="Coburn B.A."/>
            <person name="Finlay B.B."/>
        </authorList>
    </citation>
    <scope>INDUCTION</scope>
    <source>
        <strain evidence="11">SL1344</strain>
    </source>
</reference>
<reference key="9">
    <citation type="journal article" date="2007" name="Mol. Microbiol.">
        <title>The response regulator SsrB activates expression of diverse Salmonella pathogenicity island 2 promoters and counters silencing by the nucleoid-associated protein H-NS.</title>
        <authorList>
            <person name="Walthers D."/>
            <person name="Carroll R.K."/>
            <person name="Navarre W.W."/>
            <person name="Libby S.J."/>
            <person name="Fang F.C."/>
            <person name="Kenney L.J."/>
        </authorList>
    </citation>
    <scope>INDUCTION</scope>
    <source>
        <strain evidence="12">14028s / SGSC 2262</strain>
    </source>
</reference>
<reference key="10">
    <citation type="journal article" date="2010" name="Infect. Immun.">
        <title>Systematic analysis of the SsrAB virulon of Salmonella enterica.</title>
        <authorList>
            <person name="Xu X."/>
            <person name="Hensel M."/>
        </authorList>
    </citation>
    <scope>INDUCTION</scope>
    <source>
        <strain evidence="13">ATCC 14028 / SGSC 2980 / CDC 6516-60 / NCTC 12023</strain>
    </source>
</reference>
<reference key="11">
    <citation type="journal article" date="2020" name="Cell Chem. Biol.">
        <title>Targeting Two-Component Systems Uncovers a Small-Molecule Inhibitor of Salmonella Virulence.</title>
        <authorList>
            <person name="Tsai C.N."/>
            <person name="MacNair C.R."/>
            <person name="Cao M.P.T."/>
            <person name="Perry J.N."/>
            <person name="Magolan J."/>
            <person name="Brown E.D."/>
            <person name="Coombes B.K."/>
        </authorList>
    </citation>
    <scope>INDUCTION</scope>
</reference>
<dbReference type="EMBL" id="AJ224892">
    <property type="protein sequence ID" value="CAA12184.1"/>
    <property type="molecule type" value="Genomic_DNA"/>
</dbReference>
<dbReference type="EMBL" id="AF020808">
    <property type="protein sequence ID" value="AAC28878.1"/>
    <property type="molecule type" value="Genomic_DNA"/>
</dbReference>
<dbReference type="EMBL" id="AE006468">
    <property type="protein sequence ID" value="AAL20321.1"/>
    <property type="molecule type" value="Genomic_DNA"/>
</dbReference>
<dbReference type="RefSeq" id="NP_460362.1">
    <property type="nucleotide sequence ID" value="NC_003197.2"/>
</dbReference>
<dbReference type="RefSeq" id="WP_001738219.1">
    <property type="nucleotide sequence ID" value="NC_003197.2"/>
</dbReference>
<dbReference type="SMR" id="O84944"/>
<dbReference type="IntAct" id="O84944">
    <property type="interactions" value="3"/>
</dbReference>
<dbReference type="STRING" id="99287.STM1397"/>
<dbReference type="PaxDb" id="99287-STM1397"/>
<dbReference type="GeneID" id="1252915"/>
<dbReference type="KEGG" id="stm:STM1397"/>
<dbReference type="PATRIC" id="fig|99287.12.peg.1481"/>
<dbReference type="HOGENOM" id="CLU_2208196_0_0_6"/>
<dbReference type="OMA" id="KNREPDT"/>
<dbReference type="BioCyc" id="SENT99287:STM1397-MONOMER"/>
<dbReference type="Proteomes" id="UP000001014">
    <property type="component" value="Chromosome"/>
</dbReference>
<dbReference type="GO" id="GO:0005737">
    <property type="term" value="C:cytoplasm"/>
    <property type="evidence" value="ECO:0007669"/>
    <property type="project" value="UniProtKB-SubCell"/>
</dbReference>
<dbReference type="NCBIfam" id="NF011892">
    <property type="entry name" value="PRK15365.1"/>
    <property type="match status" value="1"/>
</dbReference>